<evidence type="ECO:0000250" key="1">
    <source>
        <dbReference type="UniProtKB" id="Q99829"/>
    </source>
</evidence>
<evidence type="ECO:0000250" key="2">
    <source>
        <dbReference type="UniProtKB" id="Q9UBL6"/>
    </source>
</evidence>
<evidence type="ECO:0000255" key="3">
    <source>
        <dbReference type="PROSITE-ProRule" id="PRU00041"/>
    </source>
</evidence>
<evidence type="ECO:0000255" key="4">
    <source>
        <dbReference type="PROSITE-ProRule" id="PRU00219"/>
    </source>
</evidence>
<evidence type="ECO:0000256" key="5">
    <source>
        <dbReference type="SAM" id="MobiDB-lite"/>
    </source>
</evidence>
<evidence type="ECO:0000269" key="6">
    <source>
    </source>
</evidence>
<evidence type="ECO:0000305" key="7"/>
<evidence type="ECO:0000312" key="8">
    <source>
        <dbReference type="EMBL" id="CAO00508.1"/>
    </source>
</evidence>
<evidence type="ECO:0000312" key="9">
    <source>
        <dbReference type="RGD" id="1307466"/>
    </source>
</evidence>
<keyword id="KW-0106">Calcium</keyword>
<keyword id="KW-1003">Cell membrane</keyword>
<keyword id="KW-0963">Cytoplasm</keyword>
<keyword id="KW-0472">Membrane</keyword>
<keyword id="KW-0479">Metal-binding</keyword>
<keyword id="KW-0539">Nucleus</keyword>
<keyword id="KW-1185">Reference proteome</keyword>
<keyword id="KW-0677">Repeat</keyword>
<proteinExistence type="evidence at protein level"/>
<dbReference type="EMBL" id="AM747283">
    <property type="protein sequence ID" value="CAO00508.1"/>
    <property type="molecule type" value="mRNA"/>
</dbReference>
<dbReference type="EMBL" id="AC119635">
    <property type="status" value="NOT_ANNOTATED_CDS"/>
    <property type="molecule type" value="Genomic_DNA"/>
</dbReference>
<dbReference type="RefSeq" id="NP_001386024.1">
    <property type="nucleotide sequence ID" value="NM_001399095.1"/>
</dbReference>
<dbReference type="RefSeq" id="XP_006255836.1">
    <property type="nucleotide sequence ID" value="XM_006255774.3"/>
</dbReference>
<dbReference type="SMR" id="H1UBN0"/>
<dbReference type="FunCoup" id="H1UBN0">
    <property type="interactions" value="475"/>
</dbReference>
<dbReference type="STRING" id="10116.ENSRNOP00000068558"/>
<dbReference type="iPTMnet" id="H1UBN0"/>
<dbReference type="PhosphoSitePlus" id="H1UBN0"/>
<dbReference type="jPOST" id="H1UBN0"/>
<dbReference type="Ensembl" id="ENSRNOT00000077701.2">
    <property type="protein sequence ID" value="ENSRNOP00000068558.1"/>
    <property type="gene ID" value="ENSRNOG00000015397.8"/>
</dbReference>
<dbReference type="GeneID" id="361433"/>
<dbReference type="AGR" id="RGD:1307466"/>
<dbReference type="RGD" id="1307466">
    <property type="gene designation" value="Cpne7"/>
</dbReference>
<dbReference type="GeneTree" id="ENSGT00940000160442"/>
<dbReference type="HOGENOM" id="CLU_020452_4_0_1"/>
<dbReference type="InParanoid" id="H1UBN0"/>
<dbReference type="OMA" id="CSIGTRD"/>
<dbReference type="OrthoDB" id="5855668at2759"/>
<dbReference type="Reactome" id="R-RNO-1483206">
    <property type="pathway name" value="Glycerophospholipid biosynthesis"/>
</dbReference>
<dbReference type="PRO" id="PR:H1UBN0"/>
<dbReference type="Proteomes" id="UP000002494">
    <property type="component" value="Chromosome 19"/>
</dbReference>
<dbReference type="Bgee" id="ENSRNOG00000015397">
    <property type="expression patterns" value="Expressed in spleen and 19 other cell types or tissues"/>
</dbReference>
<dbReference type="ExpressionAtlas" id="H1UBN0">
    <property type="expression patterns" value="baseline and differential"/>
</dbReference>
<dbReference type="GO" id="GO:0005737">
    <property type="term" value="C:cytoplasm"/>
    <property type="evidence" value="ECO:0000266"/>
    <property type="project" value="RGD"/>
</dbReference>
<dbReference type="GO" id="GO:0005634">
    <property type="term" value="C:nucleus"/>
    <property type="evidence" value="ECO:0000266"/>
    <property type="project" value="RGD"/>
</dbReference>
<dbReference type="GO" id="GO:0005886">
    <property type="term" value="C:plasma membrane"/>
    <property type="evidence" value="ECO:0000266"/>
    <property type="project" value="RGD"/>
</dbReference>
<dbReference type="GO" id="GO:0045202">
    <property type="term" value="C:synapse"/>
    <property type="evidence" value="ECO:0000266"/>
    <property type="project" value="RGD"/>
</dbReference>
<dbReference type="GO" id="GO:0005544">
    <property type="term" value="F:calcium-dependent phospholipid binding"/>
    <property type="evidence" value="ECO:0000318"/>
    <property type="project" value="GO_Central"/>
</dbReference>
<dbReference type="GO" id="GO:0046872">
    <property type="term" value="F:metal ion binding"/>
    <property type="evidence" value="ECO:0007669"/>
    <property type="project" value="UniProtKB-KW"/>
</dbReference>
<dbReference type="GO" id="GO:0071277">
    <property type="term" value="P:cellular response to calcium ion"/>
    <property type="evidence" value="ECO:0000266"/>
    <property type="project" value="RGD"/>
</dbReference>
<dbReference type="CDD" id="cd04048">
    <property type="entry name" value="C2A_Copine"/>
    <property type="match status" value="1"/>
</dbReference>
<dbReference type="CDD" id="cd04047">
    <property type="entry name" value="C2B_Copine"/>
    <property type="match status" value="1"/>
</dbReference>
<dbReference type="CDD" id="cd01459">
    <property type="entry name" value="vWA_copine_like"/>
    <property type="match status" value="1"/>
</dbReference>
<dbReference type="FunFam" id="3.40.50.410:FF:000042">
    <property type="entry name" value="Copine 4"/>
    <property type="match status" value="1"/>
</dbReference>
<dbReference type="FunFam" id="2.60.40.150:FF:000132">
    <property type="entry name" value="Copine 7"/>
    <property type="match status" value="1"/>
</dbReference>
<dbReference type="FunFam" id="2.60.40.150:FF:000163">
    <property type="entry name" value="Copine 7"/>
    <property type="match status" value="1"/>
</dbReference>
<dbReference type="Gene3D" id="2.60.40.150">
    <property type="entry name" value="C2 domain"/>
    <property type="match status" value="2"/>
</dbReference>
<dbReference type="Gene3D" id="3.40.50.410">
    <property type="entry name" value="von Willebrand factor, type A domain"/>
    <property type="match status" value="1"/>
</dbReference>
<dbReference type="InterPro" id="IPR000008">
    <property type="entry name" value="C2_dom"/>
</dbReference>
<dbReference type="InterPro" id="IPR035892">
    <property type="entry name" value="C2_domain_sf"/>
</dbReference>
<dbReference type="InterPro" id="IPR037768">
    <property type="entry name" value="C2B_Copine"/>
</dbReference>
<dbReference type="InterPro" id="IPR045052">
    <property type="entry name" value="Copine"/>
</dbReference>
<dbReference type="InterPro" id="IPR010734">
    <property type="entry name" value="Copine_C"/>
</dbReference>
<dbReference type="InterPro" id="IPR002035">
    <property type="entry name" value="VWF_A"/>
</dbReference>
<dbReference type="InterPro" id="IPR036465">
    <property type="entry name" value="vWFA_dom_sf"/>
</dbReference>
<dbReference type="PANTHER" id="PTHR10857">
    <property type="entry name" value="COPINE"/>
    <property type="match status" value="1"/>
</dbReference>
<dbReference type="PANTHER" id="PTHR10857:SF6">
    <property type="entry name" value="COPINE-7"/>
    <property type="match status" value="1"/>
</dbReference>
<dbReference type="Pfam" id="PF00168">
    <property type="entry name" value="C2"/>
    <property type="match status" value="2"/>
</dbReference>
<dbReference type="Pfam" id="PF07002">
    <property type="entry name" value="Copine"/>
    <property type="match status" value="1"/>
</dbReference>
<dbReference type="SMART" id="SM00239">
    <property type="entry name" value="C2"/>
    <property type="match status" value="2"/>
</dbReference>
<dbReference type="SMART" id="SM00327">
    <property type="entry name" value="VWA"/>
    <property type="match status" value="1"/>
</dbReference>
<dbReference type="SUPFAM" id="SSF49562">
    <property type="entry name" value="C2 domain (Calcium/lipid-binding domain, CaLB)"/>
    <property type="match status" value="2"/>
</dbReference>
<dbReference type="SUPFAM" id="SSF53300">
    <property type="entry name" value="vWA-like"/>
    <property type="match status" value="1"/>
</dbReference>
<dbReference type="PROSITE" id="PS50004">
    <property type="entry name" value="C2"/>
    <property type="match status" value="2"/>
</dbReference>
<dbReference type="PROSITE" id="PS50234">
    <property type="entry name" value="VWFA"/>
    <property type="match status" value="1"/>
</dbReference>
<name>CPNE7_RAT</name>
<gene>
    <name evidence="9" type="primary">Cpne7</name>
</gene>
<accession>H1UBN0</accession>
<comment type="function">
    <text evidence="1">Calcium-dependent phospholipid-binding protein that may play a role in calcium-mediated intracellular processes.</text>
</comment>
<comment type="cofactor">
    <cofactor evidence="3">
        <name>Ca(2+)</name>
        <dbReference type="ChEBI" id="CHEBI:29108"/>
    </cofactor>
</comment>
<comment type="subcellular location">
    <subcellularLocation>
        <location evidence="2">Cytoplasm</location>
    </subcellularLocation>
    <subcellularLocation>
        <location evidence="2">Nucleus</location>
    </subcellularLocation>
    <subcellularLocation>
        <location evidence="6">Cell membrane</location>
    </subcellularLocation>
    <text evidence="6">Translocates to the cell membrane in a calcium-dependent manner.</text>
</comment>
<comment type="domain">
    <text evidence="6">The C2 domain 1 is not necessary for calcium-mediated translocation and association to the plasma membrane (PubMed:26175110). The C2 domain 2 is necessary for calcium-mediated translocation and association to the plasma membrane (PubMed:26175110).</text>
</comment>
<comment type="similarity">
    <text evidence="7">Belongs to the copine family.</text>
</comment>
<protein>
    <recommendedName>
        <fullName evidence="7">Copine-7</fullName>
    </recommendedName>
    <alternativeName>
        <fullName evidence="1 9">Copine VII</fullName>
    </alternativeName>
</protein>
<reference evidence="8" key="1">
    <citation type="submission" date="2007-06" db="EMBL/GenBank/DDBJ databases">
        <title>Regulation of dendritic spine morphogenesis and synapse formation by Copine family members.</title>
        <authorList>
            <person name="Galic M."/>
            <person name="Kriz A."/>
            <person name="Vigot R."/>
            <person name="Reinhard J."/>
            <person name="Zhang Y.P."/>
            <person name="Bezakova G."/>
            <person name="Bentzinger C.F."/>
            <person name="Cloetta D."/>
            <person name="Stebler M."/>
            <person name="Bettler B."/>
            <person name="Oertner T.G."/>
            <person name="Ruegg M.A."/>
        </authorList>
    </citation>
    <scope>NUCLEOTIDE SEQUENCE [MRNA]</scope>
    <source>
        <strain evidence="8">Wistar</strain>
        <tissue evidence="8">Brain</tissue>
    </source>
</reference>
<reference key="2">
    <citation type="journal article" date="2004" name="Nature">
        <title>Genome sequence of the Brown Norway rat yields insights into mammalian evolution.</title>
        <authorList>
            <person name="Gibbs R.A."/>
            <person name="Weinstock G.M."/>
            <person name="Metzker M.L."/>
            <person name="Muzny D.M."/>
            <person name="Sodergren E.J."/>
            <person name="Scherer S."/>
            <person name="Scott G."/>
            <person name="Steffen D."/>
            <person name="Worley K.C."/>
            <person name="Burch P.E."/>
            <person name="Okwuonu G."/>
            <person name="Hines S."/>
            <person name="Lewis L."/>
            <person name="Deramo C."/>
            <person name="Delgado O."/>
            <person name="Dugan-Rocha S."/>
            <person name="Miner G."/>
            <person name="Morgan M."/>
            <person name="Hawes A."/>
            <person name="Gill R."/>
            <person name="Holt R.A."/>
            <person name="Adams M.D."/>
            <person name="Amanatides P.G."/>
            <person name="Baden-Tillson H."/>
            <person name="Barnstead M."/>
            <person name="Chin S."/>
            <person name="Evans C.A."/>
            <person name="Ferriera S."/>
            <person name="Fosler C."/>
            <person name="Glodek A."/>
            <person name="Gu Z."/>
            <person name="Jennings D."/>
            <person name="Kraft C.L."/>
            <person name="Nguyen T."/>
            <person name="Pfannkoch C.M."/>
            <person name="Sitter C."/>
            <person name="Sutton G.G."/>
            <person name="Venter J.C."/>
            <person name="Woodage T."/>
            <person name="Smith D."/>
            <person name="Lee H.-M."/>
            <person name="Gustafson E."/>
            <person name="Cahill P."/>
            <person name="Kana A."/>
            <person name="Doucette-Stamm L."/>
            <person name="Weinstock K."/>
            <person name="Fechtel K."/>
            <person name="Weiss R.B."/>
            <person name="Dunn D.M."/>
            <person name="Green E.D."/>
            <person name="Blakesley R.W."/>
            <person name="Bouffard G.G."/>
            <person name="De Jong P.J."/>
            <person name="Osoegawa K."/>
            <person name="Zhu B."/>
            <person name="Marra M."/>
            <person name="Schein J."/>
            <person name="Bosdet I."/>
            <person name="Fjell C."/>
            <person name="Jones S."/>
            <person name="Krzywinski M."/>
            <person name="Mathewson C."/>
            <person name="Siddiqui A."/>
            <person name="Wye N."/>
            <person name="McPherson J."/>
            <person name="Zhao S."/>
            <person name="Fraser C.M."/>
            <person name="Shetty J."/>
            <person name="Shatsman S."/>
            <person name="Geer K."/>
            <person name="Chen Y."/>
            <person name="Abramzon S."/>
            <person name="Nierman W.C."/>
            <person name="Havlak P.H."/>
            <person name="Chen R."/>
            <person name="Durbin K.J."/>
            <person name="Egan A."/>
            <person name="Ren Y."/>
            <person name="Song X.-Z."/>
            <person name="Li B."/>
            <person name="Liu Y."/>
            <person name="Qin X."/>
            <person name="Cawley S."/>
            <person name="Cooney A.J."/>
            <person name="D'Souza L.M."/>
            <person name="Martin K."/>
            <person name="Wu J.Q."/>
            <person name="Gonzalez-Garay M.L."/>
            <person name="Jackson A.R."/>
            <person name="Kalafus K.J."/>
            <person name="McLeod M.P."/>
            <person name="Milosavljevic A."/>
            <person name="Virk D."/>
            <person name="Volkov A."/>
            <person name="Wheeler D.A."/>
            <person name="Zhang Z."/>
            <person name="Bailey J.A."/>
            <person name="Eichler E.E."/>
            <person name="Tuzun E."/>
            <person name="Birney E."/>
            <person name="Mongin E."/>
            <person name="Ureta-Vidal A."/>
            <person name="Woodwark C."/>
            <person name="Zdobnov E."/>
            <person name="Bork P."/>
            <person name="Suyama M."/>
            <person name="Torrents D."/>
            <person name="Alexandersson M."/>
            <person name="Trask B.J."/>
            <person name="Young J.M."/>
            <person name="Huang H."/>
            <person name="Wang H."/>
            <person name="Xing H."/>
            <person name="Daniels S."/>
            <person name="Gietzen D."/>
            <person name="Schmidt J."/>
            <person name="Stevens K."/>
            <person name="Vitt U."/>
            <person name="Wingrove J."/>
            <person name="Camara F."/>
            <person name="Mar Alba M."/>
            <person name="Abril J.F."/>
            <person name="Guigo R."/>
            <person name="Smit A."/>
            <person name="Dubchak I."/>
            <person name="Rubin E.M."/>
            <person name="Couronne O."/>
            <person name="Poliakov A."/>
            <person name="Huebner N."/>
            <person name="Ganten D."/>
            <person name="Goesele C."/>
            <person name="Hummel O."/>
            <person name="Kreitler T."/>
            <person name="Lee Y.-A."/>
            <person name="Monti J."/>
            <person name="Schulz H."/>
            <person name="Zimdahl H."/>
            <person name="Himmelbauer H."/>
            <person name="Lehrach H."/>
            <person name="Jacob H.J."/>
            <person name="Bromberg S."/>
            <person name="Gullings-Handley J."/>
            <person name="Jensen-Seaman M.I."/>
            <person name="Kwitek A.E."/>
            <person name="Lazar J."/>
            <person name="Pasko D."/>
            <person name="Tonellato P.J."/>
            <person name="Twigger S."/>
            <person name="Ponting C.P."/>
            <person name="Duarte J.M."/>
            <person name="Rice S."/>
            <person name="Goodstadt L."/>
            <person name="Beatson S.A."/>
            <person name="Emes R.D."/>
            <person name="Winter E.E."/>
            <person name="Webber C."/>
            <person name="Brandt P."/>
            <person name="Nyakatura G."/>
            <person name="Adetobi M."/>
            <person name="Chiaromonte F."/>
            <person name="Elnitski L."/>
            <person name="Eswara P."/>
            <person name="Hardison R.C."/>
            <person name="Hou M."/>
            <person name="Kolbe D."/>
            <person name="Makova K."/>
            <person name="Miller W."/>
            <person name="Nekrutenko A."/>
            <person name="Riemer C."/>
            <person name="Schwartz S."/>
            <person name="Taylor J."/>
            <person name="Yang S."/>
            <person name="Zhang Y."/>
            <person name="Lindpaintner K."/>
            <person name="Andrews T.D."/>
            <person name="Caccamo M."/>
            <person name="Clamp M."/>
            <person name="Clarke L."/>
            <person name="Curwen V."/>
            <person name="Durbin R.M."/>
            <person name="Eyras E."/>
            <person name="Searle S.M."/>
            <person name="Cooper G.M."/>
            <person name="Batzoglou S."/>
            <person name="Brudno M."/>
            <person name="Sidow A."/>
            <person name="Stone E.A."/>
            <person name="Payseur B.A."/>
            <person name="Bourque G."/>
            <person name="Lopez-Otin C."/>
            <person name="Puente X.S."/>
            <person name="Chakrabarti K."/>
            <person name="Chatterji S."/>
            <person name="Dewey C."/>
            <person name="Pachter L."/>
            <person name="Bray N."/>
            <person name="Yap V.B."/>
            <person name="Caspi A."/>
            <person name="Tesler G."/>
            <person name="Pevzner P.A."/>
            <person name="Haussler D."/>
            <person name="Roskin K.M."/>
            <person name="Baertsch R."/>
            <person name="Clawson H."/>
            <person name="Furey T.S."/>
            <person name="Hinrichs A.S."/>
            <person name="Karolchik D."/>
            <person name="Kent W.J."/>
            <person name="Rosenbloom K.R."/>
            <person name="Trumbower H."/>
            <person name="Weirauch M."/>
            <person name="Cooper D.N."/>
            <person name="Stenson P.D."/>
            <person name="Ma B."/>
            <person name="Brent M."/>
            <person name="Arumugam M."/>
            <person name="Shteynberg D."/>
            <person name="Copley R.R."/>
            <person name="Taylor M.S."/>
            <person name="Riethman H."/>
            <person name="Mudunuri U."/>
            <person name="Peterson J."/>
            <person name="Guyer M."/>
            <person name="Felsenfeld A."/>
            <person name="Old S."/>
            <person name="Mockrin S."/>
            <person name="Collins F.S."/>
        </authorList>
    </citation>
    <scope>NUCLEOTIDE SEQUENCE [LARGE SCALE GENOMIC DNA]</scope>
    <source>
        <strain>Brown Norway</strain>
    </source>
</reference>
<reference key="3">
    <citation type="journal article" date="2015" name="FEBS J.">
        <title>The second C2-domain of copines -2, -6 and -7 is responsible for their calcium-dependent membrane association.</title>
        <authorList>
            <person name="Perestenko P."/>
            <person name="Watanabe M."/>
            <person name="Beusnard-Bee T."/>
            <person name="Guna P."/>
            <person name="McIlhinney J."/>
        </authorList>
    </citation>
    <scope>SUBCELLULAR LOCATION</scope>
    <scope>DOMAIN</scope>
    <scope>MUTAGENESIS OF ASP-33; ASP-35; ASP-93; ASP-104; ASP-168; ASP-174; ASP-230 AND ASP-232</scope>
</reference>
<feature type="chain" id="PRO_0000434561" description="Copine-7">
    <location>
        <begin position="1"/>
        <end position="556"/>
    </location>
</feature>
<feature type="domain" description="C2 1" evidence="3">
    <location>
        <begin position="1"/>
        <end position="128"/>
    </location>
</feature>
<feature type="domain" description="C2 2" evidence="3">
    <location>
        <begin position="135"/>
        <end position="262"/>
    </location>
</feature>
<feature type="domain" description="VWFA" evidence="4">
    <location>
        <begin position="305"/>
        <end position="504"/>
    </location>
</feature>
<feature type="region of interest" description="Disordered" evidence="5">
    <location>
        <begin position="536"/>
        <end position="556"/>
    </location>
</feature>
<feature type="binding site" evidence="3">
    <location>
        <position position="168"/>
    </location>
    <ligand>
        <name>Ca(2+)</name>
        <dbReference type="ChEBI" id="CHEBI:29108"/>
        <label>1</label>
    </ligand>
</feature>
<feature type="binding site" evidence="3">
    <location>
        <position position="168"/>
    </location>
    <ligand>
        <name>Ca(2+)</name>
        <dbReference type="ChEBI" id="CHEBI:29108"/>
        <label>2</label>
    </ligand>
</feature>
<feature type="binding site" evidence="3">
    <location>
        <position position="174"/>
    </location>
    <ligand>
        <name>Ca(2+)</name>
        <dbReference type="ChEBI" id="CHEBI:29108"/>
        <label>1</label>
    </ligand>
</feature>
<feature type="binding site" evidence="3">
    <location>
        <position position="230"/>
    </location>
    <ligand>
        <name>Ca(2+)</name>
        <dbReference type="ChEBI" id="CHEBI:29108"/>
        <label>1</label>
    </ligand>
</feature>
<feature type="binding site" evidence="3">
    <location>
        <position position="230"/>
    </location>
    <ligand>
        <name>Ca(2+)</name>
        <dbReference type="ChEBI" id="CHEBI:29108"/>
        <label>2</label>
    </ligand>
</feature>
<feature type="binding site" evidence="3">
    <location>
        <position position="232"/>
    </location>
    <ligand>
        <name>Ca(2+)</name>
        <dbReference type="ChEBI" id="CHEBI:29108"/>
        <label>1</label>
    </ligand>
</feature>
<feature type="binding site" evidence="3">
    <location>
        <position position="232"/>
    </location>
    <ligand>
        <name>Ca(2+)</name>
        <dbReference type="ChEBI" id="CHEBI:29108"/>
        <label>2</label>
    </ligand>
</feature>
<feature type="binding site" evidence="3">
    <location>
        <position position="238"/>
    </location>
    <ligand>
        <name>Ca(2+)</name>
        <dbReference type="ChEBI" id="CHEBI:29108"/>
        <label>2</label>
    </ligand>
</feature>
<feature type="mutagenesis site" description="Does not inhibit calcium-dependent translocation to the cell membrane; when associated with N-35; N-93 and N-104." evidence="6">
    <original>D</original>
    <variation>N</variation>
    <location>
        <position position="33"/>
    </location>
</feature>
<feature type="mutagenesis site" description="Does not inhibit calcium-dependent translocation to the cell membrane; when associated with N-33; N-93 and N-104." evidence="6">
    <original>D</original>
    <variation>N</variation>
    <location>
        <position position="35"/>
    </location>
</feature>
<feature type="mutagenesis site" description="Does not inhibit calcium-dependent translocation to the cell membrane; when associated with N-33; N-35 and N-104." evidence="6">
    <original>D</original>
    <variation>N</variation>
    <location>
        <position position="93"/>
    </location>
</feature>
<feature type="mutagenesis site" description="Does not inhibit calcium-dependent translocation to the cell membrane; when associated with N-33; N-35 and N-93." evidence="6">
    <original>D</original>
    <variation>N</variation>
    <location>
        <position position="104"/>
    </location>
</feature>
<feature type="mutagenesis site" description="Inhibits strongly calcium-dependent translocation to the cell membrane. Inhibits strongly calcium-dependent translocation to the cell membrane; when associated with N-173. Leads to the constitutive (calcium-independent) attachment to the cell membrane; when associated with N-174; N-230 and N-232." evidence="6">
    <original>D</original>
    <variation>N</variation>
    <location>
        <position position="168"/>
    </location>
</feature>
<feature type="mutagenesis site" description="Inhibits strongly calcium-dependent translocation to the cell membrane. Inhibits strongly calcium-dependent translocation to the cell membrane; when associated with N-167. Leads to the constitutive (calcium-independent) attachment to the cell membrane; when associated with N-167; N-230 and N-232." evidence="6">
    <original>D</original>
    <variation>N</variation>
    <location>
        <position position="174"/>
    </location>
</feature>
<feature type="mutagenesis site" description="Inhibits strongly calcium-dependent translocation to the cell membrane; when associated with N-231. Leads to the constitutive (calcium-independent) attachment to the cell membrane; when associated with N-167; N-174 and N-232." evidence="6">
    <original>D</original>
    <variation>N</variation>
    <location>
        <position position="230"/>
    </location>
</feature>
<feature type="mutagenesis site" description="Does not inhibit calcium-dependent translocation to the cell membrane. Inhibits strongly calcium-dependent translocation to the cell membrane; when associated with N-229. Leads to the constitutive (calcium-independent) attachment to the cell membrane; when associated with N-168; N-174 and N-230." evidence="6">
    <original>D</original>
    <variation>N</variation>
    <location>
        <position position="232"/>
    </location>
</feature>
<sequence length="556" mass="61978">MSGDSERTVAPGVVPAPCASKVELRLSCRHLLDRDPLTKSDPSVVLLQQAQGQWLQVDRTEVVKSSLHPVFSKVFTMDYYFEEVQKLRFEVYDTHGPSGLSCQDDDFLGGMECTLGQIVAQKKMTRPLLLRFGRNAGKSTITVIAEDISGNNGYVELSFQARKLDDKDLFSKSDPFLELYRVNDDGSEQLVYRTEVVKNNLNPVWEPFKVSLNSLCSCEETRPLKCLVWDYDSRGKHDFIGDFTTTFAEMQKAFEEEQAQWDCVNAKYKQKKRNYKNSGVVILADLKLHRVHSFLDYIMGGCQIHCTVAIDFTASNGDPRNSCSLHHINPYQPNEYLRALVAVGEVCQDYDSDKRFSALGFGARIPPKYEVSHDFAINFNPEDDECEGIQGVVEAYQNCLPRVQLYGPTNVAPIISKVARMAAAEERTGEASQYYILLILTDGVVTDMSDTREAIVRASHLPMSVIIVGVGNADFTDMQILDGDDGILRSPRGEPALRDIVQFVPFRELKNASPAALAKCVLAEVPKQVVEYYSHKDLPPRSLGGQTGEAGPSSAP</sequence>
<organism evidence="8">
    <name type="scientific">Rattus norvegicus</name>
    <name type="common">Rat</name>
    <dbReference type="NCBI Taxonomy" id="10116"/>
    <lineage>
        <taxon>Eukaryota</taxon>
        <taxon>Metazoa</taxon>
        <taxon>Chordata</taxon>
        <taxon>Craniata</taxon>
        <taxon>Vertebrata</taxon>
        <taxon>Euteleostomi</taxon>
        <taxon>Mammalia</taxon>
        <taxon>Eutheria</taxon>
        <taxon>Euarchontoglires</taxon>
        <taxon>Glires</taxon>
        <taxon>Rodentia</taxon>
        <taxon>Myomorpha</taxon>
        <taxon>Muroidea</taxon>
        <taxon>Muridae</taxon>
        <taxon>Murinae</taxon>
        <taxon>Rattus</taxon>
    </lineage>
</organism>